<comment type="function">
    <text evidence="1">Component of the SWR1 complex which mediates the ATP-dependent exchange of histone H2A for the H2A variant HZT1 leading to transcriptional regulation of selected genes by chromatin remodeling. Involved in chromosome stability (By similarity).</text>
</comment>
<comment type="subunit">
    <text evidence="1">Component of the SWR1 chromatin remodeling complex.</text>
</comment>
<comment type="subcellular location">
    <subcellularLocation>
        <location evidence="1">Nucleus</location>
    </subcellularLocation>
</comment>
<comment type="similarity">
    <text evidence="5">Belongs to the SWC5 family.</text>
</comment>
<accession>Q6CKH1</accession>
<evidence type="ECO:0000250" key="1"/>
<evidence type="ECO:0000255" key="2"/>
<evidence type="ECO:0000255" key="3">
    <source>
        <dbReference type="PROSITE-ProRule" id="PRU00610"/>
    </source>
</evidence>
<evidence type="ECO:0000256" key="4">
    <source>
        <dbReference type="SAM" id="MobiDB-lite"/>
    </source>
</evidence>
<evidence type="ECO:0000305" key="5"/>
<dbReference type="EMBL" id="CR382126">
    <property type="protein sequence ID" value="CAG98276.1"/>
    <property type="molecule type" value="Genomic_DNA"/>
</dbReference>
<dbReference type="RefSeq" id="XP_455568.1">
    <property type="nucleotide sequence ID" value="XM_455568.1"/>
</dbReference>
<dbReference type="SMR" id="Q6CKH1"/>
<dbReference type="FunCoup" id="Q6CKH1">
    <property type="interactions" value="516"/>
</dbReference>
<dbReference type="STRING" id="284590.Q6CKH1"/>
<dbReference type="PaxDb" id="284590-Q6CKH1"/>
<dbReference type="KEGG" id="kla:KLLA0_F10725g"/>
<dbReference type="eggNOG" id="KOG4776">
    <property type="taxonomic scope" value="Eukaryota"/>
</dbReference>
<dbReference type="HOGENOM" id="CLU_062474_1_0_1"/>
<dbReference type="InParanoid" id="Q6CKH1"/>
<dbReference type="OMA" id="LDWAAYV"/>
<dbReference type="Proteomes" id="UP000000598">
    <property type="component" value="Chromosome F"/>
</dbReference>
<dbReference type="GO" id="GO:0000812">
    <property type="term" value="C:Swr1 complex"/>
    <property type="evidence" value="ECO:0007669"/>
    <property type="project" value="TreeGrafter"/>
</dbReference>
<dbReference type="GO" id="GO:0006325">
    <property type="term" value="P:chromatin organization"/>
    <property type="evidence" value="ECO:0007669"/>
    <property type="project" value="UniProtKB-KW"/>
</dbReference>
<dbReference type="InterPro" id="IPR011421">
    <property type="entry name" value="BCNT-C"/>
</dbReference>
<dbReference type="InterPro" id="IPR027124">
    <property type="entry name" value="Swc5/CFDP1/2"/>
</dbReference>
<dbReference type="PANTHER" id="PTHR48407">
    <property type="entry name" value="CRANIOFACIAL DEVELOPMENT PROTEIN 1"/>
    <property type="match status" value="1"/>
</dbReference>
<dbReference type="PANTHER" id="PTHR48407:SF1">
    <property type="entry name" value="CRANIOFACIAL DEVELOPMENT PROTEIN 1"/>
    <property type="match status" value="1"/>
</dbReference>
<dbReference type="Pfam" id="PF07572">
    <property type="entry name" value="BCNT"/>
    <property type="match status" value="1"/>
</dbReference>
<dbReference type="PROSITE" id="PS51279">
    <property type="entry name" value="BCNT_C"/>
    <property type="match status" value="1"/>
</dbReference>
<protein>
    <recommendedName>
        <fullName>SWR1-complex protein 5</fullName>
    </recommendedName>
</protein>
<gene>
    <name type="primary">SWC5</name>
    <name type="ordered locus">KLLA0F10725g</name>
</gene>
<sequence>MSDTKGSDLNEDSALEFDEESYHESEDEDFDPSKEQNKRKTTNDNKKTDVNANISDSDQDEDEDEEYDEEAQEEEKKYSSIVSESGGLIKTRRARLQEEHDALKNKYEQIDIAETSGKSNDLWRQLKERALSRSQFNGSVMDQDAGSITDSMQEQKILIERTYKFAGEVIKEKKWVLRHSAEGQEYLNSIKFKTGTLDKNTVPPDTVKNTQAQQTEGKQNRVNEAGRLLKRHLKRPPILEQIIAGNLKPKLTTLEKSQLDWASYVDKEGIHEELNLHNKDGFLAKQDFLNRVESSKDQKYRELRKLQLQTEQQKQ</sequence>
<reference key="1">
    <citation type="journal article" date="2004" name="Nature">
        <title>Genome evolution in yeasts.</title>
        <authorList>
            <person name="Dujon B."/>
            <person name="Sherman D."/>
            <person name="Fischer G."/>
            <person name="Durrens P."/>
            <person name="Casaregola S."/>
            <person name="Lafontaine I."/>
            <person name="de Montigny J."/>
            <person name="Marck C."/>
            <person name="Neuveglise C."/>
            <person name="Talla E."/>
            <person name="Goffard N."/>
            <person name="Frangeul L."/>
            <person name="Aigle M."/>
            <person name="Anthouard V."/>
            <person name="Babour A."/>
            <person name="Barbe V."/>
            <person name="Barnay S."/>
            <person name="Blanchin S."/>
            <person name="Beckerich J.-M."/>
            <person name="Beyne E."/>
            <person name="Bleykasten C."/>
            <person name="Boisrame A."/>
            <person name="Boyer J."/>
            <person name="Cattolico L."/>
            <person name="Confanioleri F."/>
            <person name="de Daruvar A."/>
            <person name="Despons L."/>
            <person name="Fabre E."/>
            <person name="Fairhead C."/>
            <person name="Ferry-Dumazet H."/>
            <person name="Groppi A."/>
            <person name="Hantraye F."/>
            <person name="Hennequin C."/>
            <person name="Jauniaux N."/>
            <person name="Joyet P."/>
            <person name="Kachouri R."/>
            <person name="Kerrest A."/>
            <person name="Koszul R."/>
            <person name="Lemaire M."/>
            <person name="Lesur I."/>
            <person name="Ma L."/>
            <person name="Muller H."/>
            <person name="Nicaud J.-M."/>
            <person name="Nikolski M."/>
            <person name="Oztas S."/>
            <person name="Ozier-Kalogeropoulos O."/>
            <person name="Pellenz S."/>
            <person name="Potier S."/>
            <person name="Richard G.-F."/>
            <person name="Straub M.-L."/>
            <person name="Suleau A."/>
            <person name="Swennen D."/>
            <person name="Tekaia F."/>
            <person name="Wesolowski-Louvel M."/>
            <person name="Westhof E."/>
            <person name="Wirth B."/>
            <person name="Zeniou-Meyer M."/>
            <person name="Zivanovic Y."/>
            <person name="Bolotin-Fukuhara M."/>
            <person name="Thierry A."/>
            <person name="Bouchier C."/>
            <person name="Caudron B."/>
            <person name="Scarpelli C."/>
            <person name="Gaillardin C."/>
            <person name="Weissenbach J."/>
            <person name="Wincker P."/>
            <person name="Souciet J.-L."/>
        </authorList>
    </citation>
    <scope>NUCLEOTIDE SEQUENCE [LARGE SCALE GENOMIC DNA]</scope>
    <source>
        <strain>ATCC 8585 / CBS 2359 / DSM 70799 / NBRC 1267 / NRRL Y-1140 / WM37</strain>
    </source>
</reference>
<name>SWC5_KLULA</name>
<organism>
    <name type="scientific">Kluyveromyces lactis (strain ATCC 8585 / CBS 2359 / DSM 70799 / NBRC 1267 / NRRL Y-1140 / WM37)</name>
    <name type="common">Yeast</name>
    <name type="synonym">Candida sphaerica</name>
    <dbReference type="NCBI Taxonomy" id="284590"/>
    <lineage>
        <taxon>Eukaryota</taxon>
        <taxon>Fungi</taxon>
        <taxon>Dikarya</taxon>
        <taxon>Ascomycota</taxon>
        <taxon>Saccharomycotina</taxon>
        <taxon>Saccharomycetes</taxon>
        <taxon>Saccharomycetales</taxon>
        <taxon>Saccharomycetaceae</taxon>
        <taxon>Kluyveromyces</taxon>
    </lineage>
</organism>
<proteinExistence type="inferred from homology"/>
<feature type="chain" id="PRO_0000212508" description="SWR1-complex protein 5">
    <location>
        <begin position="1"/>
        <end position="315"/>
    </location>
</feature>
<feature type="domain" description="BCNT-C" evidence="3">
    <location>
        <begin position="233"/>
        <end position="310"/>
    </location>
</feature>
<feature type="region of interest" description="Disordered" evidence="4">
    <location>
        <begin position="1"/>
        <end position="84"/>
    </location>
</feature>
<feature type="coiled-coil region" evidence="2">
    <location>
        <begin position="56"/>
        <end position="115"/>
    </location>
</feature>
<feature type="compositionally biased region" description="Acidic residues" evidence="4">
    <location>
        <begin position="9"/>
        <end position="30"/>
    </location>
</feature>
<feature type="compositionally biased region" description="Basic and acidic residues" evidence="4">
    <location>
        <begin position="31"/>
        <end position="49"/>
    </location>
</feature>
<feature type="compositionally biased region" description="Acidic residues" evidence="4">
    <location>
        <begin position="57"/>
        <end position="73"/>
    </location>
</feature>
<keyword id="KW-0010">Activator</keyword>
<keyword id="KW-0156">Chromatin regulator</keyword>
<keyword id="KW-0175">Coiled coil</keyword>
<keyword id="KW-0539">Nucleus</keyword>
<keyword id="KW-1185">Reference proteome</keyword>
<keyword id="KW-0804">Transcription</keyword>
<keyword id="KW-0805">Transcription regulation</keyword>